<evidence type="ECO:0000255" key="1">
    <source>
        <dbReference type="HAMAP-Rule" id="MF_00163"/>
    </source>
</evidence>
<sequence length="170" mass="19139">MALLPILEFPDPRLRTKAVPVDAAEVTSQAFQTLLDDMFHTMYEAPGIGLAASQVDVHKRFMVIDISDEKNLPQVFVNPEIVSKQGEQLYQEGCLSVPGIYADVSRADAITVRYLDRQGQPQELHADGLLAVCIQHEMDHLDGKLFVDYLSPLKREMVRKKLAKQRKHVA</sequence>
<comment type="function">
    <text evidence="1">Removes the formyl group from the N-terminal Met of newly synthesized proteins. Requires at least a dipeptide for an efficient rate of reaction. N-terminal L-methionine is a prerequisite for activity but the enzyme has broad specificity at other positions.</text>
</comment>
<comment type="catalytic activity">
    <reaction evidence="1">
        <text>N-terminal N-formyl-L-methionyl-[peptide] + H2O = N-terminal L-methionyl-[peptide] + formate</text>
        <dbReference type="Rhea" id="RHEA:24420"/>
        <dbReference type="Rhea" id="RHEA-COMP:10639"/>
        <dbReference type="Rhea" id="RHEA-COMP:10640"/>
        <dbReference type="ChEBI" id="CHEBI:15377"/>
        <dbReference type="ChEBI" id="CHEBI:15740"/>
        <dbReference type="ChEBI" id="CHEBI:49298"/>
        <dbReference type="ChEBI" id="CHEBI:64731"/>
        <dbReference type="EC" id="3.5.1.88"/>
    </reaction>
</comment>
<comment type="cofactor">
    <cofactor evidence="1">
        <name>Fe(2+)</name>
        <dbReference type="ChEBI" id="CHEBI:29033"/>
    </cofactor>
    <text evidence="1">Binds 1 Fe(2+) ion.</text>
</comment>
<comment type="similarity">
    <text evidence="1">Belongs to the polypeptide deformylase family.</text>
</comment>
<protein>
    <recommendedName>
        <fullName evidence="1">Peptide deformylase 2</fullName>
        <shortName evidence="1">PDF 2</shortName>
        <ecNumber evidence="1">3.5.1.88</ecNumber>
    </recommendedName>
    <alternativeName>
        <fullName evidence="1">Polypeptide deformylase 2</fullName>
    </alternativeName>
</protein>
<proteinExistence type="inferred from homology"/>
<name>DEF2_XANAC</name>
<gene>
    <name evidence="1" type="primary">def2</name>
    <name type="ordered locus">XAC3801</name>
</gene>
<reference key="1">
    <citation type="journal article" date="2002" name="Nature">
        <title>Comparison of the genomes of two Xanthomonas pathogens with differing host specificities.</title>
        <authorList>
            <person name="da Silva A.C.R."/>
            <person name="Ferro J.A."/>
            <person name="Reinach F.C."/>
            <person name="Farah C.S."/>
            <person name="Furlan L.R."/>
            <person name="Quaggio R.B."/>
            <person name="Monteiro-Vitorello C.B."/>
            <person name="Van Sluys M.A."/>
            <person name="Almeida N.F. Jr."/>
            <person name="Alves L.M.C."/>
            <person name="do Amaral A.M."/>
            <person name="Bertolini M.C."/>
            <person name="Camargo L.E.A."/>
            <person name="Camarotte G."/>
            <person name="Cannavan F."/>
            <person name="Cardozo J."/>
            <person name="Chambergo F."/>
            <person name="Ciapina L.P."/>
            <person name="Cicarelli R.M.B."/>
            <person name="Coutinho L.L."/>
            <person name="Cursino-Santos J.R."/>
            <person name="El-Dorry H."/>
            <person name="Faria J.B."/>
            <person name="Ferreira A.J.S."/>
            <person name="Ferreira R.C.C."/>
            <person name="Ferro M.I.T."/>
            <person name="Formighieri E.F."/>
            <person name="Franco M.C."/>
            <person name="Greggio C.C."/>
            <person name="Gruber A."/>
            <person name="Katsuyama A.M."/>
            <person name="Kishi L.T."/>
            <person name="Leite R.P."/>
            <person name="Lemos E.G.M."/>
            <person name="Lemos M.V.F."/>
            <person name="Locali E.C."/>
            <person name="Machado M.A."/>
            <person name="Madeira A.M.B.N."/>
            <person name="Martinez-Rossi N.M."/>
            <person name="Martins E.C."/>
            <person name="Meidanis J."/>
            <person name="Menck C.F.M."/>
            <person name="Miyaki C.Y."/>
            <person name="Moon D.H."/>
            <person name="Moreira L.M."/>
            <person name="Novo M.T.M."/>
            <person name="Okura V.K."/>
            <person name="Oliveira M.C."/>
            <person name="Oliveira V.R."/>
            <person name="Pereira H.A."/>
            <person name="Rossi A."/>
            <person name="Sena J.A.D."/>
            <person name="Silva C."/>
            <person name="de Souza R.F."/>
            <person name="Spinola L.A.F."/>
            <person name="Takita M.A."/>
            <person name="Tamura R.E."/>
            <person name="Teixeira E.C."/>
            <person name="Tezza R.I.D."/>
            <person name="Trindade dos Santos M."/>
            <person name="Truffi D."/>
            <person name="Tsai S.M."/>
            <person name="White F.F."/>
            <person name="Setubal J.C."/>
            <person name="Kitajima J.P."/>
        </authorList>
    </citation>
    <scope>NUCLEOTIDE SEQUENCE [LARGE SCALE GENOMIC DNA]</scope>
    <source>
        <strain>306</strain>
    </source>
</reference>
<organism>
    <name type="scientific">Xanthomonas axonopodis pv. citri (strain 306)</name>
    <dbReference type="NCBI Taxonomy" id="190486"/>
    <lineage>
        <taxon>Bacteria</taxon>
        <taxon>Pseudomonadati</taxon>
        <taxon>Pseudomonadota</taxon>
        <taxon>Gammaproteobacteria</taxon>
        <taxon>Lysobacterales</taxon>
        <taxon>Lysobacteraceae</taxon>
        <taxon>Xanthomonas</taxon>
    </lineage>
</organism>
<accession>Q8PG20</accession>
<feature type="chain" id="PRO_0000082884" description="Peptide deformylase 2">
    <location>
        <begin position="1"/>
        <end position="170"/>
    </location>
</feature>
<feature type="active site" evidence="1">
    <location>
        <position position="137"/>
    </location>
</feature>
<feature type="binding site" evidence="1">
    <location>
        <position position="94"/>
    </location>
    <ligand>
        <name>Fe cation</name>
        <dbReference type="ChEBI" id="CHEBI:24875"/>
    </ligand>
</feature>
<feature type="binding site" evidence="1">
    <location>
        <position position="136"/>
    </location>
    <ligand>
        <name>Fe cation</name>
        <dbReference type="ChEBI" id="CHEBI:24875"/>
    </ligand>
</feature>
<feature type="binding site" evidence="1">
    <location>
        <position position="140"/>
    </location>
    <ligand>
        <name>Fe cation</name>
        <dbReference type="ChEBI" id="CHEBI:24875"/>
    </ligand>
</feature>
<dbReference type="EC" id="3.5.1.88" evidence="1"/>
<dbReference type="EMBL" id="AE008923">
    <property type="protein sequence ID" value="AAM38643.1"/>
    <property type="molecule type" value="Genomic_DNA"/>
</dbReference>
<dbReference type="SMR" id="Q8PG20"/>
<dbReference type="KEGG" id="xac:XAC3801"/>
<dbReference type="eggNOG" id="COG0242">
    <property type="taxonomic scope" value="Bacteria"/>
</dbReference>
<dbReference type="HOGENOM" id="CLU_061901_2_1_6"/>
<dbReference type="Proteomes" id="UP000000576">
    <property type="component" value="Chromosome"/>
</dbReference>
<dbReference type="GO" id="GO:0046872">
    <property type="term" value="F:metal ion binding"/>
    <property type="evidence" value="ECO:0007669"/>
    <property type="project" value="UniProtKB-KW"/>
</dbReference>
<dbReference type="GO" id="GO:0042586">
    <property type="term" value="F:peptide deformylase activity"/>
    <property type="evidence" value="ECO:0007669"/>
    <property type="project" value="UniProtKB-UniRule"/>
</dbReference>
<dbReference type="GO" id="GO:0043686">
    <property type="term" value="P:co-translational protein modification"/>
    <property type="evidence" value="ECO:0007669"/>
    <property type="project" value="TreeGrafter"/>
</dbReference>
<dbReference type="GO" id="GO:0006412">
    <property type="term" value="P:translation"/>
    <property type="evidence" value="ECO:0007669"/>
    <property type="project" value="UniProtKB-UniRule"/>
</dbReference>
<dbReference type="CDD" id="cd00487">
    <property type="entry name" value="Pep_deformylase"/>
    <property type="match status" value="1"/>
</dbReference>
<dbReference type="FunFam" id="3.90.45.10:FF:000001">
    <property type="entry name" value="Peptide deformylase"/>
    <property type="match status" value="1"/>
</dbReference>
<dbReference type="Gene3D" id="3.90.45.10">
    <property type="entry name" value="Peptide deformylase"/>
    <property type="match status" value="1"/>
</dbReference>
<dbReference type="HAMAP" id="MF_00163">
    <property type="entry name" value="Pep_deformylase"/>
    <property type="match status" value="1"/>
</dbReference>
<dbReference type="InterPro" id="IPR023635">
    <property type="entry name" value="Peptide_deformylase"/>
</dbReference>
<dbReference type="InterPro" id="IPR036821">
    <property type="entry name" value="Peptide_deformylase_sf"/>
</dbReference>
<dbReference type="NCBIfam" id="TIGR00079">
    <property type="entry name" value="pept_deformyl"/>
    <property type="match status" value="1"/>
</dbReference>
<dbReference type="NCBIfam" id="NF001159">
    <property type="entry name" value="PRK00150.1-3"/>
    <property type="match status" value="1"/>
</dbReference>
<dbReference type="PANTHER" id="PTHR10458">
    <property type="entry name" value="PEPTIDE DEFORMYLASE"/>
    <property type="match status" value="1"/>
</dbReference>
<dbReference type="PANTHER" id="PTHR10458:SF21">
    <property type="entry name" value="PEPTIDE DEFORMYLASE"/>
    <property type="match status" value="1"/>
</dbReference>
<dbReference type="Pfam" id="PF01327">
    <property type="entry name" value="Pep_deformylase"/>
    <property type="match status" value="1"/>
</dbReference>
<dbReference type="PIRSF" id="PIRSF004749">
    <property type="entry name" value="Pep_def"/>
    <property type="match status" value="1"/>
</dbReference>
<dbReference type="PRINTS" id="PR01576">
    <property type="entry name" value="PDEFORMYLASE"/>
</dbReference>
<dbReference type="SUPFAM" id="SSF56420">
    <property type="entry name" value="Peptide deformylase"/>
    <property type="match status" value="1"/>
</dbReference>
<keyword id="KW-0378">Hydrolase</keyword>
<keyword id="KW-0408">Iron</keyword>
<keyword id="KW-0479">Metal-binding</keyword>
<keyword id="KW-0648">Protein biosynthesis</keyword>